<dbReference type="EC" id="2.1.1.178" evidence="1"/>
<dbReference type="EMBL" id="CU928163">
    <property type="protein sequence ID" value="CAR13323.1"/>
    <property type="molecule type" value="Genomic_DNA"/>
</dbReference>
<dbReference type="RefSeq" id="WP_001309555.1">
    <property type="nucleotide sequence ID" value="NC_011751.1"/>
</dbReference>
<dbReference type="RefSeq" id="YP_002412853.1">
    <property type="nucleotide sequence ID" value="NC_011751.1"/>
</dbReference>
<dbReference type="SMR" id="B7NBI3"/>
<dbReference type="STRING" id="585056.ECUMN_2129"/>
<dbReference type="KEGG" id="eum:ECUMN_2129"/>
<dbReference type="PATRIC" id="fig|585056.7.peg.2315"/>
<dbReference type="HOGENOM" id="CLU_005316_6_2_6"/>
<dbReference type="Proteomes" id="UP000007097">
    <property type="component" value="Chromosome"/>
</dbReference>
<dbReference type="GO" id="GO:0005737">
    <property type="term" value="C:cytoplasm"/>
    <property type="evidence" value="ECO:0007669"/>
    <property type="project" value="UniProtKB-SubCell"/>
</dbReference>
<dbReference type="GO" id="GO:0003723">
    <property type="term" value="F:RNA binding"/>
    <property type="evidence" value="ECO:0007669"/>
    <property type="project" value="UniProtKB-KW"/>
</dbReference>
<dbReference type="GO" id="GO:0009383">
    <property type="term" value="F:rRNA (cytosine-C5-)-methyltransferase activity"/>
    <property type="evidence" value="ECO:0007669"/>
    <property type="project" value="TreeGrafter"/>
</dbReference>
<dbReference type="GO" id="GO:0070475">
    <property type="term" value="P:rRNA base methylation"/>
    <property type="evidence" value="ECO:0007669"/>
    <property type="project" value="TreeGrafter"/>
</dbReference>
<dbReference type="CDD" id="cd02440">
    <property type="entry name" value="AdoMet_MTases"/>
    <property type="match status" value="1"/>
</dbReference>
<dbReference type="FunFam" id="3.10.450.720:FF:000001">
    <property type="entry name" value="Ribosomal RNA small subunit methyltransferase F"/>
    <property type="match status" value="1"/>
</dbReference>
<dbReference type="FunFam" id="3.40.50.150:FF:000079">
    <property type="entry name" value="Ribosomal RNA small subunit methyltransferase F"/>
    <property type="match status" value="1"/>
</dbReference>
<dbReference type="Gene3D" id="3.10.450.720">
    <property type="match status" value="1"/>
</dbReference>
<dbReference type="Gene3D" id="3.40.50.150">
    <property type="entry name" value="Vaccinia Virus protein VP39"/>
    <property type="match status" value="1"/>
</dbReference>
<dbReference type="HAMAP" id="MF_01579">
    <property type="entry name" value="16SrRNA_methyltr_F"/>
    <property type="match status" value="1"/>
</dbReference>
<dbReference type="InterPro" id="IPR031341">
    <property type="entry name" value="Methyltr_RsmF_N"/>
</dbReference>
<dbReference type="InterPro" id="IPR049560">
    <property type="entry name" value="MeTrfase_RsmB-F_NOP2_cat"/>
</dbReference>
<dbReference type="InterPro" id="IPR001678">
    <property type="entry name" value="MeTrfase_RsmB-F_NOP2_dom"/>
</dbReference>
<dbReference type="InterPro" id="IPR027391">
    <property type="entry name" value="Nol1_Nop2_Fmu_2"/>
</dbReference>
<dbReference type="InterPro" id="IPR011023">
    <property type="entry name" value="Nop2p"/>
</dbReference>
<dbReference type="InterPro" id="IPR023267">
    <property type="entry name" value="RCMT"/>
</dbReference>
<dbReference type="InterPro" id="IPR023545">
    <property type="entry name" value="rRNA_ssu_MeTfrase_F"/>
</dbReference>
<dbReference type="InterPro" id="IPR018314">
    <property type="entry name" value="RsmB/NOL1/NOP2-like_CS"/>
</dbReference>
<dbReference type="InterPro" id="IPR029063">
    <property type="entry name" value="SAM-dependent_MTases_sf"/>
</dbReference>
<dbReference type="InterPro" id="IPR048457">
    <property type="entry name" value="YebU_pre-PUA_dom"/>
</dbReference>
<dbReference type="NCBIfam" id="TIGR00446">
    <property type="entry name" value="nop2p"/>
    <property type="match status" value="1"/>
</dbReference>
<dbReference type="NCBIfam" id="NF008898">
    <property type="entry name" value="PRK11933.1"/>
    <property type="match status" value="1"/>
</dbReference>
<dbReference type="PANTHER" id="PTHR22807:SF30">
    <property type="entry name" value="28S RRNA (CYTOSINE(4447)-C(5))-METHYLTRANSFERASE-RELATED"/>
    <property type="match status" value="1"/>
</dbReference>
<dbReference type="PANTHER" id="PTHR22807">
    <property type="entry name" value="NOP2 YEAST -RELATED NOL1/NOP2/FMU SUN DOMAIN-CONTAINING"/>
    <property type="match status" value="1"/>
</dbReference>
<dbReference type="Pfam" id="PF01189">
    <property type="entry name" value="Methyltr_RsmB-F"/>
    <property type="match status" value="1"/>
</dbReference>
<dbReference type="Pfam" id="PF17125">
    <property type="entry name" value="Methyltr_RsmF_N"/>
    <property type="match status" value="1"/>
</dbReference>
<dbReference type="Pfam" id="PF13636">
    <property type="entry name" value="Methyltranf_PUA"/>
    <property type="match status" value="1"/>
</dbReference>
<dbReference type="Pfam" id="PF21150">
    <property type="entry name" value="YebU_pre-PUA_dom"/>
    <property type="match status" value="1"/>
</dbReference>
<dbReference type="PRINTS" id="PR02008">
    <property type="entry name" value="RCMTFAMILY"/>
</dbReference>
<dbReference type="SUPFAM" id="SSF53335">
    <property type="entry name" value="S-adenosyl-L-methionine-dependent methyltransferases"/>
    <property type="match status" value="1"/>
</dbReference>
<dbReference type="PROSITE" id="PS01153">
    <property type="entry name" value="NOL1_NOP2_SUN"/>
    <property type="match status" value="1"/>
</dbReference>
<dbReference type="PROSITE" id="PS51686">
    <property type="entry name" value="SAM_MT_RSMB_NOP"/>
    <property type="match status" value="1"/>
</dbReference>
<protein>
    <recommendedName>
        <fullName evidence="1">Ribosomal RNA small subunit methyltransferase F</fullName>
        <ecNumber evidence="1">2.1.1.178</ecNumber>
    </recommendedName>
    <alternativeName>
        <fullName evidence="1">16S rRNA m5C1407 methyltransferase</fullName>
    </alternativeName>
    <alternativeName>
        <fullName evidence="1">rRNA (cytosine-C(5)-)-methyltransferase RsmF</fullName>
    </alternativeName>
</protein>
<comment type="function">
    <text evidence="1">Specifically methylates the cytosine at position 1407 (m5C1407) of 16S rRNA.</text>
</comment>
<comment type="catalytic activity">
    <reaction evidence="1">
        <text>cytidine(1407) in 16S rRNA + S-adenosyl-L-methionine = 5-methylcytidine(1407) in 16S rRNA + S-adenosyl-L-homocysteine + H(+)</text>
        <dbReference type="Rhea" id="RHEA:42756"/>
        <dbReference type="Rhea" id="RHEA-COMP:10223"/>
        <dbReference type="Rhea" id="RHEA-COMP:10224"/>
        <dbReference type="ChEBI" id="CHEBI:15378"/>
        <dbReference type="ChEBI" id="CHEBI:57856"/>
        <dbReference type="ChEBI" id="CHEBI:59789"/>
        <dbReference type="ChEBI" id="CHEBI:74483"/>
        <dbReference type="ChEBI" id="CHEBI:82748"/>
        <dbReference type="EC" id="2.1.1.178"/>
    </reaction>
</comment>
<comment type="subcellular location">
    <subcellularLocation>
        <location evidence="1">Cytoplasm</location>
    </subcellularLocation>
</comment>
<comment type="similarity">
    <text evidence="1">Belongs to the class I-like SAM-binding methyltransferase superfamily. RsmB/NOP family.</text>
</comment>
<gene>
    <name evidence="1" type="primary">rsmF</name>
    <name type="ordered locus">ECUMN_2129</name>
</gene>
<proteinExistence type="inferred from homology"/>
<evidence type="ECO:0000255" key="1">
    <source>
        <dbReference type="HAMAP-Rule" id="MF_01579"/>
    </source>
</evidence>
<accession>B7NBI3</accession>
<reference key="1">
    <citation type="journal article" date="2009" name="PLoS Genet.">
        <title>Organised genome dynamics in the Escherichia coli species results in highly diverse adaptive paths.</title>
        <authorList>
            <person name="Touchon M."/>
            <person name="Hoede C."/>
            <person name="Tenaillon O."/>
            <person name="Barbe V."/>
            <person name="Baeriswyl S."/>
            <person name="Bidet P."/>
            <person name="Bingen E."/>
            <person name="Bonacorsi S."/>
            <person name="Bouchier C."/>
            <person name="Bouvet O."/>
            <person name="Calteau A."/>
            <person name="Chiapello H."/>
            <person name="Clermont O."/>
            <person name="Cruveiller S."/>
            <person name="Danchin A."/>
            <person name="Diard M."/>
            <person name="Dossat C."/>
            <person name="Karoui M.E."/>
            <person name="Frapy E."/>
            <person name="Garry L."/>
            <person name="Ghigo J.M."/>
            <person name="Gilles A.M."/>
            <person name="Johnson J."/>
            <person name="Le Bouguenec C."/>
            <person name="Lescat M."/>
            <person name="Mangenot S."/>
            <person name="Martinez-Jehanne V."/>
            <person name="Matic I."/>
            <person name="Nassif X."/>
            <person name="Oztas S."/>
            <person name="Petit M.A."/>
            <person name="Pichon C."/>
            <person name="Rouy Z."/>
            <person name="Ruf C.S."/>
            <person name="Schneider D."/>
            <person name="Tourret J."/>
            <person name="Vacherie B."/>
            <person name="Vallenet D."/>
            <person name="Medigue C."/>
            <person name="Rocha E.P.C."/>
            <person name="Denamur E."/>
        </authorList>
    </citation>
    <scope>NUCLEOTIDE SEQUENCE [LARGE SCALE GENOMIC DNA]</scope>
    <source>
        <strain>UMN026 / ExPEC</strain>
    </source>
</reference>
<keyword id="KW-0963">Cytoplasm</keyword>
<keyword id="KW-0489">Methyltransferase</keyword>
<keyword id="KW-0694">RNA-binding</keyword>
<keyword id="KW-0698">rRNA processing</keyword>
<keyword id="KW-0949">S-adenosyl-L-methionine</keyword>
<keyword id="KW-0808">Transferase</keyword>
<name>RSMF_ECOLU</name>
<organism>
    <name type="scientific">Escherichia coli O17:K52:H18 (strain UMN026 / ExPEC)</name>
    <dbReference type="NCBI Taxonomy" id="585056"/>
    <lineage>
        <taxon>Bacteria</taxon>
        <taxon>Pseudomonadati</taxon>
        <taxon>Pseudomonadota</taxon>
        <taxon>Gammaproteobacteria</taxon>
        <taxon>Enterobacterales</taxon>
        <taxon>Enterobacteriaceae</taxon>
        <taxon>Escherichia</taxon>
    </lineage>
</organism>
<sequence length="479" mass="53246">MAQHTVYFPDAFLTQMREAMPSTLSFDDFLAACQRPLRRSIRVNTLKISVADFLQLTASYGWTLTPIPWCEEGFWIERDDEDALPLGSTAEHLSGLFYIQEASSMLPVAALFADGNAPQRVMDVAAAPGSKTTQIAARMNNEGAILANEFSASRVKVLHANISRCGIRNVALTHFDGRVFGAALPEMFDAILLDAPCSGEGVVRKDPDALKNWSPESNQEIAATQRELIDSAFHALCPGGTLVYSTCTLNQEENEAVCRWLKETYPDAVEFLPLGDLFPGANKALTEEGFLHVFPQIYDCEGFFVARLRKTQAIPALPAPKYKVGNFPFSPVKDREAGQIRQAAAGVGLNWDENLRLWQRDKELWLFPVGIEALIGKVRFSRLGIKLAETHNKGYRWQHEAVIALASPDNMNAFELTPQEAEEWYRGRDVYPQAAPVADDVLVTFQHQPIGLAKRIGSRLKNSYPRELVRDGKLFTGNA</sequence>
<feature type="chain" id="PRO_1000147569" description="Ribosomal RNA small subunit methyltransferase F">
    <location>
        <begin position="1"/>
        <end position="479"/>
    </location>
</feature>
<feature type="active site" description="Nucleophile" evidence="1">
    <location>
        <position position="247"/>
    </location>
</feature>
<feature type="binding site" evidence="1">
    <location>
        <begin position="125"/>
        <end position="131"/>
    </location>
    <ligand>
        <name>S-adenosyl-L-methionine</name>
        <dbReference type="ChEBI" id="CHEBI:59789"/>
    </ligand>
</feature>
<feature type="binding site" evidence="1">
    <location>
        <position position="149"/>
    </location>
    <ligand>
        <name>S-adenosyl-L-methionine</name>
        <dbReference type="ChEBI" id="CHEBI:59789"/>
    </ligand>
</feature>
<feature type="binding site" evidence="1">
    <location>
        <position position="176"/>
    </location>
    <ligand>
        <name>S-adenosyl-L-methionine</name>
        <dbReference type="ChEBI" id="CHEBI:59789"/>
    </ligand>
</feature>
<feature type="binding site" evidence="1">
    <location>
        <position position="194"/>
    </location>
    <ligand>
        <name>S-adenosyl-L-methionine</name>
        <dbReference type="ChEBI" id="CHEBI:59789"/>
    </ligand>
</feature>